<sequence>MRFKQDFFEQLVGYYSQVFPQGISNPHWLAWSEDAAGLIGLTQPTDELLQGMSGNAQIDGASYYAQVYSGHQFGGYSPQLGDGRSIILGEALGPQGTWDVALKGAGPTPYSRHGDGRAVMRSAVREFLISEALHHLHIPTTRALAVIGSDVPVWRETQETAAITVRLAKSHIRFGHFEFFCHSERGAPTKLKQLLDFTISQHYPDLSCDAAGYKAWFARVVTDTAKMIANWQAIGFAHGVMNTDNMSILGDTFDFGPFAFLDTFKEDFICNHSDPEGRYAFGQQPGIGLWNLQRLAQALSSIIASDDLIAALNMYQGELVKHYLILMRGKLGLTTSVTEAELDDQDLALIGGFTSLMERNQLDYTNTWRRFGQLDPSSSHSSLRDDFVDRDGFDAWYQLYQARLGNVEEVEQWQAARNRANPKYILRNYLAQEAIIGVEEGNLAPLQQLQQVLQNPFDEQLEFDDLAKRPPDWGQGLIMSCSS</sequence>
<keyword id="KW-0067">ATP-binding</keyword>
<keyword id="KW-0460">Magnesium</keyword>
<keyword id="KW-0464">Manganese</keyword>
<keyword id="KW-0479">Metal-binding</keyword>
<keyword id="KW-0547">Nucleotide-binding</keyword>
<keyword id="KW-0548">Nucleotidyltransferase</keyword>
<keyword id="KW-0808">Transferase</keyword>
<accession>B0TKD7</accession>
<protein>
    <recommendedName>
        <fullName evidence="1">Protein nucleotidyltransferase YdiU</fullName>
        <ecNumber evidence="1">2.7.7.-</ecNumber>
    </recommendedName>
    <alternativeName>
        <fullName evidence="1">Protein adenylyltransferase YdiU</fullName>
        <ecNumber evidence="1">2.7.7.108</ecNumber>
    </alternativeName>
    <alternativeName>
        <fullName evidence="1">Protein uridylyltransferase YdiU</fullName>
        <ecNumber evidence="1">2.7.7.-</ecNumber>
    </alternativeName>
</protein>
<name>SELO_SHEHH</name>
<reference key="1">
    <citation type="submission" date="2008-01" db="EMBL/GenBank/DDBJ databases">
        <title>Complete sequence of Shewanella halifaxensis HAW-EB4.</title>
        <authorList>
            <consortium name="US DOE Joint Genome Institute"/>
            <person name="Copeland A."/>
            <person name="Lucas S."/>
            <person name="Lapidus A."/>
            <person name="Glavina del Rio T."/>
            <person name="Dalin E."/>
            <person name="Tice H."/>
            <person name="Bruce D."/>
            <person name="Goodwin L."/>
            <person name="Pitluck S."/>
            <person name="Sims D."/>
            <person name="Brettin T."/>
            <person name="Detter J.C."/>
            <person name="Han C."/>
            <person name="Kuske C.R."/>
            <person name="Schmutz J."/>
            <person name="Larimer F."/>
            <person name="Land M."/>
            <person name="Hauser L."/>
            <person name="Kyrpides N."/>
            <person name="Kim E."/>
            <person name="Zhao J.-S."/>
            <person name="Richardson P."/>
        </authorList>
    </citation>
    <scope>NUCLEOTIDE SEQUENCE [LARGE SCALE GENOMIC DNA]</scope>
    <source>
        <strain>HAW-EB4</strain>
    </source>
</reference>
<comment type="function">
    <text evidence="1">Nucleotidyltransferase involved in the post-translational modification of proteins. It can catalyze the addition of adenosine monophosphate (AMP) or uridine monophosphate (UMP) to a protein, resulting in modifications known as AMPylation and UMPylation.</text>
</comment>
<comment type="catalytic activity">
    <reaction evidence="1">
        <text>L-seryl-[protein] + ATP = 3-O-(5'-adenylyl)-L-seryl-[protein] + diphosphate</text>
        <dbReference type="Rhea" id="RHEA:58120"/>
        <dbReference type="Rhea" id="RHEA-COMP:9863"/>
        <dbReference type="Rhea" id="RHEA-COMP:15073"/>
        <dbReference type="ChEBI" id="CHEBI:29999"/>
        <dbReference type="ChEBI" id="CHEBI:30616"/>
        <dbReference type="ChEBI" id="CHEBI:33019"/>
        <dbReference type="ChEBI" id="CHEBI:142516"/>
        <dbReference type="EC" id="2.7.7.108"/>
    </reaction>
</comment>
<comment type="catalytic activity">
    <reaction evidence="1">
        <text>L-threonyl-[protein] + ATP = 3-O-(5'-adenylyl)-L-threonyl-[protein] + diphosphate</text>
        <dbReference type="Rhea" id="RHEA:54292"/>
        <dbReference type="Rhea" id="RHEA-COMP:11060"/>
        <dbReference type="Rhea" id="RHEA-COMP:13847"/>
        <dbReference type="ChEBI" id="CHEBI:30013"/>
        <dbReference type="ChEBI" id="CHEBI:30616"/>
        <dbReference type="ChEBI" id="CHEBI:33019"/>
        <dbReference type="ChEBI" id="CHEBI:138113"/>
        <dbReference type="EC" id="2.7.7.108"/>
    </reaction>
</comment>
<comment type="catalytic activity">
    <reaction evidence="1">
        <text>L-tyrosyl-[protein] + ATP = O-(5'-adenylyl)-L-tyrosyl-[protein] + diphosphate</text>
        <dbReference type="Rhea" id="RHEA:54288"/>
        <dbReference type="Rhea" id="RHEA-COMP:10136"/>
        <dbReference type="Rhea" id="RHEA-COMP:13846"/>
        <dbReference type="ChEBI" id="CHEBI:30616"/>
        <dbReference type="ChEBI" id="CHEBI:33019"/>
        <dbReference type="ChEBI" id="CHEBI:46858"/>
        <dbReference type="ChEBI" id="CHEBI:83624"/>
        <dbReference type="EC" id="2.7.7.108"/>
    </reaction>
</comment>
<comment type="catalytic activity">
    <reaction evidence="1">
        <text>L-histidyl-[protein] + UTP = N(tele)-(5'-uridylyl)-L-histidyl-[protein] + diphosphate</text>
        <dbReference type="Rhea" id="RHEA:83891"/>
        <dbReference type="Rhea" id="RHEA-COMP:9745"/>
        <dbReference type="Rhea" id="RHEA-COMP:20239"/>
        <dbReference type="ChEBI" id="CHEBI:29979"/>
        <dbReference type="ChEBI" id="CHEBI:33019"/>
        <dbReference type="ChEBI" id="CHEBI:46398"/>
        <dbReference type="ChEBI" id="CHEBI:233474"/>
    </reaction>
</comment>
<comment type="catalytic activity">
    <reaction evidence="1">
        <text>L-seryl-[protein] + UTP = O-(5'-uridylyl)-L-seryl-[protein] + diphosphate</text>
        <dbReference type="Rhea" id="RHEA:64604"/>
        <dbReference type="Rhea" id="RHEA-COMP:9863"/>
        <dbReference type="Rhea" id="RHEA-COMP:16635"/>
        <dbReference type="ChEBI" id="CHEBI:29999"/>
        <dbReference type="ChEBI" id="CHEBI:33019"/>
        <dbReference type="ChEBI" id="CHEBI:46398"/>
        <dbReference type="ChEBI" id="CHEBI:156051"/>
    </reaction>
</comment>
<comment type="catalytic activity">
    <reaction evidence="1">
        <text>L-tyrosyl-[protein] + UTP = O-(5'-uridylyl)-L-tyrosyl-[protein] + diphosphate</text>
        <dbReference type="Rhea" id="RHEA:83887"/>
        <dbReference type="Rhea" id="RHEA-COMP:10136"/>
        <dbReference type="Rhea" id="RHEA-COMP:20238"/>
        <dbReference type="ChEBI" id="CHEBI:33019"/>
        <dbReference type="ChEBI" id="CHEBI:46398"/>
        <dbReference type="ChEBI" id="CHEBI:46858"/>
        <dbReference type="ChEBI" id="CHEBI:90602"/>
    </reaction>
</comment>
<comment type="cofactor">
    <cofactor evidence="1">
        <name>Mg(2+)</name>
        <dbReference type="ChEBI" id="CHEBI:18420"/>
    </cofactor>
    <cofactor evidence="1">
        <name>Mn(2+)</name>
        <dbReference type="ChEBI" id="CHEBI:29035"/>
    </cofactor>
</comment>
<comment type="similarity">
    <text evidence="1">Belongs to the SELO family.</text>
</comment>
<feature type="chain" id="PRO_1000083138" description="Protein nucleotidyltransferase YdiU">
    <location>
        <begin position="1"/>
        <end position="483"/>
    </location>
</feature>
<feature type="active site" description="Proton acceptor" evidence="1">
    <location>
        <position position="244"/>
    </location>
</feature>
<feature type="binding site" evidence="1">
    <location>
        <position position="81"/>
    </location>
    <ligand>
        <name>ATP</name>
        <dbReference type="ChEBI" id="CHEBI:30616"/>
    </ligand>
</feature>
<feature type="binding site" evidence="1">
    <location>
        <position position="83"/>
    </location>
    <ligand>
        <name>ATP</name>
        <dbReference type="ChEBI" id="CHEBI:30616"/>
    </ligand>
</feature>
<feature type="binding site" evidence="1">
    <location>
        <position position="84"/>
    </location>
    <ligand>
        <name>ATP</name>
        <dbReference type="ChEBI" id="CHEBI:30616"/>
    </ligand>
</feature>
<feature type="binding site" evidence="1">
    <location>
        <position position="103"/>
    </location>
    <ligand>
        <name>ATP</name>
        <dbReference type="ChEBI" id="CHEBI:30616"/>
    </ligand>
</feature>
<feature type="binding site" evidence="1">
    <location>
        <position position="115"/>
    </location>
    <ligand>
        <name>ATP</name>
        <dbReference type="ChEBI" id="CHEBI:30616"/>
    </ligand>
</feature>
<feature type="binding site" evidence="1">
    <location>
        <position position="116"/>
    </location>
    <ligand>
        <name>ATP</name>
        <dbReference type="ChEBI" id="CHEBI:30616"/>
    </ligand>
</feature>
<feature type="binding site" evidence="1">
    <location>
        <position position="166"/>
    </location>
    <ligand>
        <name>ATP</name>
        <dbReference type="ChEBI" id="CHEBI:30616"/>
    </ligand>
</feature>
<feature type="binding site" evidence="1">
    <location>
        <position position="173"/>
    </location>
    <ligand>
        <name>ATP</name>
        <dbReference type="ChEBI" id="CHEBI:30616"/>
    </ligand>
</feature>
<feature type="binding site" evidence="1">
    <location>
        <position position="245"/>
    </location>
    <ligand>
        <name>Mg(2+)</name>
        <dbReference type="ChEBI" id="CHEBI:18420"/>
    </ligand>
</feature>
<feature type="binding site" evidence="1">
    <location>
        <position position="254"/>
    </location>
    <ligand>
        <name>ATP</name>
        <dbReference type="ChEBI" id="CHEBI:30616"/>
    </ligand>
</feature>
<feature type="binding site" evidence="1">
    <location>
        <position position="254"/>
    </location>
    <ligand>
        <name>Mg(2+)</name>
        <dbReference type="ChEBI" id="CHEBI:18420"/>
    </ligand>
</feature>
<evidence type="ECO:0000255" key="1">
    <source>
        <dbReference type="HAMAP-Rule" id="MF_00692"/>
    </source>
</evidence>
<organism>
    <name type="scientific">Shewanella halifaxensis (strain HAW-EB4)</name>
    <dbReference type="NCBI Taxonomy" id="458817"/>
    <lineage>
        <taxon>Bacteria</taxon>
        <taxon>Pseudomonadati</taxon>
        <taxon>Pseudomonadota</taxon>
        <taxon>Gammaproteobacteria</taxon>
        <taxon>Alteromonadales</taxon>
        <taxon>Shewanellaceae</taxon>
        <taxon>Shewanella</taxon>
    </lineage>
</organism>
<proteinExistence type="inferred from homology"/>
<dbReference type="EC" id="2.7.7.-" evidence="1"/>
<dbReference type="EC" id="2.7.7.108" evidence="1"/>
<dbReference type="EMBL" id="CP000931">
    <property type="protein sequence ID" value="ABZ78523.1"/>
    <property type="molecule type" value="Genomic_DNA"/>
</dbReference>
<dbReference type="RefSeq" id="WP_012279040.1">
    <property type="nucleotide sequence ID" value="NC_010334.1"/>
</dbReference>
<dbReference type="SMR" id="B0TKD7"/>
<dbReference type="STRING" id="458817.Shal_3983"/>
<dbReference type="KEGG" id="shl:Shal_3983"/>
<dbReference type="eggNOG" id="COG0397">
    <property type="taxonomic scope" value="Bacteria"/>
</dbReference>
<dbReference type="HOGENOM" id="CLU_010245_4_0_6"/>
<dbReference type="OrthoDB" id="9776281at2"/>
<dbReference type="Proteomes" id="UP000001317">
    <property type="component" value="Chromosome"/>
</dbReference>
<dbReference type="GO" id="GO:0070733">
    <property type="term" value="F:AMPylase activity"/>
    <property type="evidence" value="ECO:0007669"/>
    <property type="project" value="RHEA"/>
</dbReference>
<dbReference type="GO" id="GO:0005524">
    <property type="term" value="F:ATP binding"/>
    <property type="evidence" value="ECO:0007669"/>
    <property type="project" value="UniProtKB-UniRule"/>
</dbReference>
<dbReference type="GO" id="GO:0000287">
    <property type="term" value="F:magnesium ion binding"/>
    <property type="evidence" value="ECO:0007669"/>
    <property type="project" value="UniProtKB-UniRule"/>
</dbReference>
<dbReference type="HAMAP" id="MF_00692">
    <property type="entry name" value="YdiU_SelO"/>
    <property type="match status" value="1"/>
</dbReference>
<dbReference type="InterPro" id="IPR003846">
    <property type="entry name" value="SelO"/>
</dbReference>
<dbReference type="NCBIfam" id="NF000658">
    <property type="entry name" value="PRK00029.1"/>
    <property type="match status" value="1"/>
</dbReference>
<dbReference type="PANTHER" id="PTHR32057">
    <property type="entry name" value="PROTEIN ADENYLYLTRANSFERASE SELO, MITOCHONDRIAL"/>
    <property type="match status" value="1"/>
</dbReference>
<dbReference type="PANTHER" id="PTHR32057:SF14">
    <property type="entry name" value="PROTEIN ADENYLYLTRANSFERASE SELO, MITOCHONDRIAL"/>
    <property type="match status" value="1"/>
</dbReference>
<dbReference type="Pfam" id="PF02696">
    <property type="entry name" value="SelO"/>
    <property type="match status" value="1"/>
</dbReference>
<gene>
    <name evidence="1" type="primary">ydiU</name>
    <name evidence="1" type="synonym">selO</name>
    <name type="ordered locus">Shal_3983</name>
</gene>